<protein>
    <recommendedName>
        <fullName evidence="1">Large ribosomal subunit protein uL15</fullName>
    </recommendedName>
    <alternativeName>
        <fullName evidence="3">50S ribosomal protein L15</fullName>
    </alternativeName>
</protein>
<feature type="chain" id="PRO_1000086700" description="Large ribosomal subunit protein uL15">
    <location>
        <begin position="1"/>
        <end position="155"/>
    </location>
</feature>
<feature type="region of interest" description="Disordered" evidence="2">
    <location>
        <begin position="1"/>
        <end position="47"/>
    </location>
</feature>
<feature type="compositionally biased region" description="Basic and acidic residues" evidence="2">
    <location>
        <begin position="1"/>
        <end position="13"/>
    </location>
</feature>
<feature type="compositionally biased region" description="Gly residues" evidence="2">
    <location>
        <begin position="21"/>
        <end position="35"/>
    </location>
</feature>
<name>RL15_BART1</name>
<keyword id="KW-0687">Ribonucleoprotein</keyword>
<keyword id="KW-0689">Ribosomal protein</keyword>
<keyword id="KW-0694">RNA-binding</keyword>
<keyword id="KW-0699">rRNA-binding</keyword>
<comment type="function">
    <text evidence="1">Binds to the 23S rRNA.</text>
</comment>
<comment type="subunit">
    <text evidence="1">Part of the 50S ribosomal subunit.</text>
</comment>
<comment type="similarity">
    <text evidence="1">Belongs to the universal ribosomal protein uL15 family.</text>
</comment>
<gene>
    <name evidence="1" type="primary">rplO</name>
    <name type="ordered locus">BT_1499</name>
</gene>
<proteinExistence type="inferred from homology"/>
<reference key="1">
    <citation type="journal article" date="2007" name="Nat. Genet.">
        <title>Genomic analysis of Bartonella identifies type IV secretion systems as host adaptability factors.</title>
        <authorList>
            <person name="Saenz H.L."/>
            <person name="Engel P."/>
            <person name="Stoeckli M.C."/>
            <person name="Lanz C."/>
            <person name="Raddatz G."/>
            <person name="Vayssier-Taussat M."/>
            <person name="Birtles R."/>
            <person name="Schuster S.C."/>
            <person name="Dehio C."/>
        </authorList>
    </citation>
    <scope>NUCLEOTIDE SEQUENCE [LARGE SCALE GENOMIC DNA]</scope>
    <source>
        <strain>CIP 105476 / IBS 506</strain>
    </source>
</reference>
<accession>A9IW02</accession>
<sequence length="155" mass="16738">MKLNELRDCEGATKNRKRIGRGIGSGTGKTGGRGVKGQKSRSGVSLNGFEGGQMPIYRRLPKRGFKNFFSKIYNEVSLGRIQLAVDTGKLNIEKPVDMIALKEAGIIRREKDGVRLLSDGDLKAKITFHVSGASQAARVKVEKVGGQVISPEVVG</sequence>
<dbReference type="EMBL" id="AM260525">
    <property type="protein sequence ID" value="CAK01845.1"/>
    <property type="molecule type" value="Genomic_DNA"/>
</dbReference>
<dbReference type="RefSeq" id="WP_012231984.1">
    <property type="nucleotide sequence ID" value="NC_010161.1"/>
</dbReference>
<dbReference type="SMR" id="A9IW02"/>
<dbReference type="KEGG" id="btr:BT_1499"/>
<dbReference type="eggNOG" id="COG0200">
    <property type="taxonomic scope" value="Bacteria"/>
</dbReference>
<dbReference type="HOGENOM" id="CLU_055188_4_0_5"/>
<dbReference type="Proteomes" id="UP000001592">
    <property type="component" value="Chromosome"/>
</dbReference>
<dbReference type="GO" id="GO:0022625">
    <property type="term" value="C:cytosolic large ribosomal subunit"/>
    <property type="evidence" value="ECO:0007669"/>
    <property type="project" value="TreeGrafter"/>
</dbReference>
<dbReference type="GO" id="GO:0019843">
    <property type="term" value="F:rRNA binding"/>
    <property type="evidence" value="ECO:0007669"/>
    <property type="project" value="UniProtKB-UniRule"/>
</dbReference>
<dbReference type="GO" id="GO:0003735">
    <property type="term" value="F:structural constituent of ribosome"/>
    <property type="evidence" value="ECO:0007669"/>
    <property type="project" value="InterPro"/>
</dbReference>
<dbReference type="GO" id="GO:0006412">
    <property type="term" value="P:translation"/>
    <property type="evidence" value="ECO:0007669"/>
    <property type="project" value="UniProtKB-UniRule"/>
</dbReference>
<dbReference type="Gene3D" id="3.100.10.10">
    <property type="match status" value="1"/>
</dbReference>
<dbReference type="HAMAP" id="MF_01341">
    <property type="entry name" value="Ribosomal_uL15"/>
    <property type="match status" value="1"/>
</dbReference>
<dbReference type="InterPro" id="IPR030878">
    <property type="entry name" value="Ribosomal_uL15"/>
</dbReference>
<dbReference type="InterPro" id="IPR021131">
    <property type="entry name" value="Ribosomal_uL15/eL18"/>
</dbReference>
<dbReference type="InterPro" id="IPR036227">
    <property type="entry name" value="Ribosomal_uL15/eL18_sf"/>
</dbReference>
<dbReference type="InterPro" id="IPR005749">
    <property type="entry name" value="Ribosomal_uL15_bac-type"/>
</dbReference>
<dbReference type="InterPro" id="IPR001196">
    <property type="entry name" value="Ribosomal_uL15_CS"/>
</dbReference>
<dbReference type="NCBIfam" id="TIGR01071">
    <property type="entry name" value="rplO_bact"/>
    <property type="match status" value="1"/>
</dbReference>
<dbReference type="PANTHER" id="PTHR12934">
    <property type="entry name" value="50S RIBOSOMAL PROTEIN L15"/>
    <property type="match status" value="1"/>
</dbReference>
<dbReference type="PANTHER" id="PTHR12934:SF11">
    <property type="entry name" value="LARGE RIBOSOMAL SUBUNIT PROTEIN UL15M"/>
    <property type="match status" value="1"/>
</dbReference>
<dbReference type="Pfam" id="PF00828">
    <property type="entry name" value="Ribosomal_L27A"/>
    <property type="match status" value="1"/>
</dbReference>
<dbReference type="SUPFAM" id="SSF52080">
    <property type="entry name" value="Ribosomal proteins L15p and L18e"/>
    <property type="match status" value="1"/>
</dbReference>
<dbReference type="PROSITE" id="PS00475">
    <property type="entry name" value="RIBOSOMAL_L15"/>
    <property type="match status" value="1"/>
</dbReference>
<organism>
    <name type="scientific">Bartonella tribocorum (strain CIP 105476 / IBS 506)</name>
    <dbReference type="NCBI Taxonomy" id="382640"/>
    <lineage>
        <taxon>Bacteria</taxon>
        <taxon>Pseudomonadati</taxon>
        <taxon>Pseudomonadota</taxon>
        <taxon>Alphaproteobacteria</taxon>
        <taxon>Hyphomicrobiales</taxon>
        <taxon>Bartonellaceae</taxon>
        <taxon>Bartonella</taxon>
    </lineage>
</organism>
<evidence type="ECO:0000255" key="1">
    <source>
        <dbReference type="HAMAP-Rule" id="MF_01341"/>
    </source>
</evidence>
<evidence type="ECO:0000256" key="2">
    <source>
        <dbReference type="SAM" id="MobiDB-lite"/>
    </source>
</evidence>
<evidence type="ECO:0000305" key="3"/>